<name>KDPA1_STAAR</name>
<evidence type="ECO:0000255" key="1">
    <source>
        <dbReference type="HAMAP-Rule" id="MF_00275"/>
    </source>
</evidence>
<dbReference type="EMBL" id="BX571856">
    <property type="protein sequence ID" value="CAG41146.1"/>
    <property type="molecule type" value="Genomic_DNA"/>
</dbReference>
<dbReference type="SMR" id="Q6GEZ6"/>
<dbReference type="KEGG" id="sar:SAR2165"/>
<dbReference type="HOGENOM" id="CLU_018614_3_0_9"/>
<dbReference type="Proteomes" id="UP000000596">
    <property type="component" value="Chromosome"/>
</dbReference>
<dbReference type="GO" id="GO:0005886">
    <property type="term" value="C:plasma membrane"/>
    <property type="evidence" value="ECO:0007669"/>
    <property type="project" value="UniProtKB-SubCell"/>
</dbReference>
<dbReference type="GO" id="GO:0008556">
    <property type="term" value="F:P-type potassium transmembrane transporter activity"/>
    <property type="evidence" value="ECO:0007669"/>
    <property type="project" value="InterPro"/>
</dbReference>
<dbReference type="GO" id="GO:0030955">
    <property type="term" value="F:potassium ion binding"/>
    <property type="evidence" value="ECO:0007669"/>
    <property type="project" value="UniProtKB-UniRule"/>
</dbReference>
<dbReference type="HAMAP" id="MF_00275">
    <property type="entry name" value="KdpA"/>
    <property type="match status" value="1"/>
</dbReference>
<dbReference type="InterPro" id="IPR004623">
    <property type="entry name" value="KdpA"/>
</dbReference>
<dbReference type="NCBIfam" id="TIGR00680">
    <property type="entry name" value="kdpA"/>
    <property type="match status" value="1"/>
</dbReference>
<dbReference type="PANTHER" id="PTHR30607">
    <property type="entry name" value="POTASSIUM-TRANSPORTING ATPASE A CHAIN"/>
    <property type="match status" value="1"/>
</dbReference>
<dbReference type="PANTHER" id="PTHR30607:SF2">
    <property type="entry name" value="POTASSIUM-TRANSPORTING ATPASE POTASSIUM-BINDING SUBUNIT"/>
    <property type="match status" value="1"/>
</dbReference>
<dbReference type="Pfam" id="PF03814">
    <property type="entry name" value="KdpA"/>
    <property type="match status" value="1"/>
</dbReference>
<dbReference type="PIRSF" id="PIRSF001294">
    <property type="entry name" value="K_ATPaseA"/>
    <property type="match status" value="1"/>
</dbReference>
<proteinExistence type="inferred from homology"/>
<sequence>MEIILFLTMMVMIAYVFSGYLYRVALVQSSRVDLIFTRFENMCFKIIGTDLEHMSAKTYVKHFLAFNGFMGVITFVLLIVQQWLFLNPNHNLNQSIDLAFNTAISFLTNSNLQHYNGESGVTYLTQMIVMTYLMFTSSASGYAVCIAMLRRLTGLTNIIGNFYQDIVRFIVRVLLPLSCLISILLMTQGVPQTLHANLMIRTLSGHIQHIAFGPIASLESIKHLGTNGGGFLAGNSATPFENPNIWSNFIEMGSMMLLPMSMLFLFGRMLSRHGKRVHRHALILFVAMFFIFIAILTLTMWSEYRGNPILANLGIHGANMEGKEVRFGAGLSALFTVITTAFTTGSVNNMHDSLTPLGGLGPMVLMMLNVVFGGEGVGLMNLLIYVLLTLFICSLMVGKTPEYLNMPIGAREMKCIVLVFLIHPILILVFSALAFMIPGASESITNPSFHGISQVMYEMTSAAANNGSGFEGLKDDTTFWNISTGIIMLLSRYIPIILQLMISSSLVNKKSYHQDKHTIAIDKPYFGVSLIVFIVLLSGLTFIPVLLLGPIGEFLTLK</sequence>
<accession>Q6GEZ6</accession>
<gene>
    <name evidence="1" type="primary">kdpA1</name>
    <name type="ordered locus">SAR2165</name>
</gene>
<comment type="function">
    <text evidence="1">Part of the high-affinity ATP-driven potassium transport (or Kdp) system, which catalyzes the hydrolysis of ATP coupled with the electrogenic transport of potassium into the cytoplasm. This subunit binds the extracellular potassium ions and delivers the ions to the membrane domain of KdpB through an intramembrane tunnel.</text>
</comment>
<comment type="subunit">
    <text evidence="1">The system is composed of three essential subunits: KdpA, KdpB and KdpC.</text>
</comment>
<comment type="subcellular location">
    <subcellularLocation>
        <location evidence="1">Cell membrane</location>
        <topology evidence="1">Multi-pass membrane protein</topology>
    </subcellularLocation>
</comment>
<comment type="similarity">
    <text evidence="1">Belongs to the KdpA family.</text>
</comment>
<organism>
    <name type="scientific">Staphylococcus aureus (strain MRSA252)</name>
    <dbReference type="NCBI Taxonomy" id="282458"/>
    <lineage>
        <taxon>Bacteria</taxon>
        <taxon>Bacillati</taxon>
        <taxon>Bacillota</taxon>
        <taxon>Bacilli</taxon>
        <taxon>Bacillales</taxon>
        <taxon>Staphylococcaceae</taxon>
        <taxon>Staphylococcus</taxon>
    </lineage>
</organism>
<protein>
    <recommendedName>
        <fullName evidence="1">Potassium-transporting ATPase potassium-binding subunit 1</fullName>
    </recommendedName>
    <alternativeName>
        <fullName evidence="1">ATP phosphohydrolase [potassium-transporting] A chain 1</fullName>
    </alternativeName>
    <alternativeName>
        <fullName evidence="1">Potassium-binding and translocating subunit A 1</fullName>
    </alternativeName>
    <alternativeName>
        <fullName evidence="1">Potassium-translocating ATPase A chain 1</fullName>
    </alternativeName>
</protein>
<reference key="1">
    <citation type="journal article" date="2004" name="Proc. Natl. Acad. Sci. U.S.A.">
        <title>Complete genomes of two clinical Staphylococcus aureus strains: evidence for the rapid evolution of virulence and drug resistance.</title>
        <authorList>
            <person name="Holden M.T.G."/>
            <person name="Feil E.J."/>
            <person name="Lindsay J.A."/>
            <person name="Peacock S.J."/>
            <person name="Day N.P.J."/>
            <person name="Enright M.C."/>
            <person name="Foster T.J."/>
            <person name="Moore C.E."/>
            <person name="Hurst L."/>
            <person name="Atkin R."/>
            <person name="Barron A."/>
            <person name="Bason N."/>
            <person name="Bentley S.D."/>
            <person name="Chillingworth C."/>
            <person name="Chillingworth T."/>
            <person name="Churcher C."/>
            <person name="Clark L."/>
            <person name="Corton C."/>
            <person name="Cronin A."/>
            <person name="Doggett J."/>
            <person name="Dowd L."/>
            <person name="Feltwell T."/>
            <person name="Hance Z."/>
            <person name="Harris B."/>
            <person name="Hauser H."/>
            <person name="Holroyd S."/>
            <person name="Jagels K."/>
            <person name="James K.D."/>
            <person name="Lennard N."/>
            <person name="Line A."/>
            <person name="Mayes R."/>
            <person name="Moule S."/>
            <person name="Mungall K."/>
            <person name="Ormond D."/>
            <person name="Quail M.A."/>
            <person name="Rabbinowitsch E."/>
            <person name="Rutherford K.M."/>
            <person name="Sanders M."/>
            <person name="Sharp S."/>
            <person name="Simmonds M."/>
            <person name="Stevens K."/>
            <person name="Whitehead S."/>
            <person name="Barrell B.G."/>
            <person name="Spratt B.G."/>
            <person name="Parkhill J."/>
        </authorList>
    </citation>
    <scope>NUCLEOTIDE SEQUENCE [LARGE SCALE GENOMIC DNA]</scope>
    <source>
        <strain>MRSA252</strain>
    </source>
</reference>
<feature type="chain" id="PRO_0000166529" description="Potassium-transporting ATPase potassium-binding subunit 1">
    <location>
        <begin position="1"/>
        <end position="558"/>
    </location>
</feature>
<feature type="transmembrane region" description="Helical" evidence="1">
    <location>
        <begin position="1"/>
        <end position="21"/>
    </location>
</feature>
<feature type="transmembrane region" description="Helical" evidence="1">
    <location>
        <begin position="66"/>
        <end position="86"/>
    </location>
</feature>
<feature type="transmembrane region" description="Helical" evidence="1">
    <location>
        <begin position="127"/>
        <end position="147"/>
    </location>
</feature>
<feature type="transmembrane region" description="Helical" evidence="1">
    <location>
        <begin position="166"/>
        <end position="186"/>
    </location>
</feature>
<feature type="transmembrane region" description="Helical" evidence="1">
    <location>
        <begin position="245"/>
        <end position="265"/>
    </location>
</feature>
<feature type="transmembrane region" description="Helical" evidence="1">
    <location>
        <begin position="281"/>
        <end position="301"/>
    </location>
</feature>
<feature type="transmembrane region" description="Helical" evidence="1">
    <location>
        <begin position="327"/>
        <end position="347"/>
    </location>
</feature>
<feature type="transmembrane region" description="Helical" evidence="1">
    <location>
        <begin position="354"/>
        <end position="374"/>
    </location>
</feature>
<feature type="transmembrane region" description="Helical" evidence="1">
    <location>
        <begin position="377"/>
        <end position="397"/>
    </location>
</feature>
<feature type="transmembrane region" description="Helical" evidence="1">
    <location>
        <begin position="416"/>
        <end position="436"/>
    </location>
</feature>
<feature type="transmembrane region" description="Helical" evidence="1">
    <location>
        <begin position="482"/>
        <end position="502"/>
    </location>
</feature>
<feature type="transmembrane region" description="Helical" evidence="1">
    <location>
        <begin position="531"/>
        <end position="551"/>
    </location>
</feature>
<keyword id="KW-1003">Cell membrane</keyword>
<keyword id="KW-0406">Ion transport</keyword>
<keyword id="KW-0472">Membrane</keyword>
<keyword id="KW-0630">Potassium</keyword>
<keyword id="KW-0633">Potassium transport</keyword>
<keyword id="KW-0812">Transmembrane</keyword>
<keyword id="KW-1133">Transmembrane helix</keyword>
<keyword id="KW-0813">Transport</keyword>